<proteinExistence type="evidence at protein level"/>
<name>GPMPP_METBU</name>
<organism>
    <name type="scientific">Methanococcoides burtonii (strain DSM 6242 / NBRC 107633 / OCM 468 / ACE-M)</name>
    <dbReference type="NCBI Taxonomy" id="259564"/>
    <lineage>
        <taxon>Archaea</taxon>
        <taxon>Methanobacteriati</taxon>
        <taxon>Methanobacteriota</taxon>
        <taxon>Stenosarchaea group</taxon>
        <taxon>Methanomicrobia</taxon>
        <taxon>Methanosarcinales</taxon>
        <taxon>Methanosarcinaceae</taxon>
        <taxon>Methanococcoides</taxon>
    </lineage>
</organism>
<feature type="chain" id="PRO_0000420162" description="Glucosyl-3-phosphoglycerate/mannosyl-3-phosphoglycerate phosphatase">
    <location>
        <begin position="1"/>
        <end position="272"/>
    </location>
</feature>
<feature type="active site" description="Nucleophile" evidence="2">
    <location>
        <position position="8"/>
    </location>
</feature>
<feature type="binding site" evidence="2">
    <location>
        <position position="8"/>
    </location>
    <ligand>
        <name>Mg(2+)</name>
        <dbReference type="ChEBI" id="CHEBI:18420"/>
    </ligand>
</feature>
<feature type="binding site" evidence="2">
    <location>
        <position position="10"/>
    </location>
    <ligand>
        <name>Mg(2+)</name>
        <dbReference type="ChEBI" id="CHEBI:18420"/>
    </ligand>
</feature>
<feature type="binding site" evidence="2">
    <location>
        <position position="214"/>
    </location>
    <ligand>
        <name>Mg(2+)</name>
        <dbReference type="ChEBI" id="CHEBI:18420"/>
    </ligand>
</feature>
<accession>Q12XX5</accession>
<evidence type="ECO:0000250" key="1">
    <source>
        <dbReference type="UniProtKB" id="C0QRP9"/>
    </source>
</evidence>
<evidence type="ECO:0000250" key="2">
    <source>
        <dbReference type="UniProtKB" id="O58690"/>
    </source>
</evidence>
<evidence type="ECO:0000269" key="3">
    <source>
    </source>
</evidence>
<evidence type="ECO:0000303" key="4">
    <source>
    </source>
</evidence>
<evidence type="ECO:0000305" key="5"/>
<sequence>MKHIIFTDLDGTLIDHDTYSYDAARPALDLLKEKEIPLIFCTSKTRAELEVYVDELECHHPFISENGGAIFIPKDHFSIELKDVHEIGNYKVIEFGTSYTRIRGVLEDIRKKTGFKITGFGDLDAEGVSKDTGLDIRSAKLAKLREYDEAFRLEEDENATAKVIELIHAAGLNYTKGGRYWHIMGDNDKGKAVRALTEIYRQQFTEVVTIALGDSLNDLPMLKAVDIPFLVQKPDGKYDPSIILTEIKHAEGIGPVGWNNAIMDLIGKNNNI</sequence>
<comment type="function">
    <text evidence="3">Involved in the biosynthesis of glucosylglycerate. Catalyzes the dephosphorylation of glucosyl-3-phosphoglycerate (GPG) and mannosyl-3-phosphoglycerate (MPG) to glucosylglycerate (GG) and mannosylglycerate (MG), respectively.</text>
</comment>
<comment type="catalytic activity">
    <reaction evidence="3">
        <text>(2R)-2-O-(alpha-D-glucopyranosyl)-3-phospho-glycerate + H2O = (2R)-2-O-(alpha-D-glucopyranosyl)-glycerate + phosphate</text>
        <dbReference type="Rhea" id="RHEA:31343"/>
        <dbReference type="ChEBI" id="CHEBI:15377"/>
        <dbReference type="ChEBI" id="CHEBI:43474"/>
        <dbReference type="ChEBI" id="CHEBI:62510"/>
        <dbReference type="ChEBI" id="CHEBI:62600"/>
        <dbReference type="EC" id="3.1.3.85"/>
    </reaction>
</comment>
<comment type="catalytic activity">
    <reaction evidence="3">
        <text>2-O-(alpha-D-mannosyl)-3-phosphoglycerate + H2O = (2R)-2-O-(alpha-D-mannosyl)-glycerate + phosphate</text>
        <dbReference type="Rhea" id="RHEA:19309"/>
        <dbReference type="ChEBI" id="CHEBI:15377"/>
        <dbReference type="ChEBI" id="CHEBI:43474"/>
        <dbReference type="ChEBI" id="CHEBI:57541"/>
        <dbReference type="ChEBI" id="CHEBI:57744"/>
        <dbReference type="EC" id="3.1.3.70"/>
    </reaction>
</comment>
<comment type="cofactor">
    <cofactor evidence="3">
        <name>Co(2+)</name>
        <dbReference type="ChEBI" id="CHEBI:48828"/>
    </cofactor>
    <cofactor evidence="3">
        <name>Mg(2+)</name>
        <dbReference type="ChEBI" id="CHEBI:18420"/>
    </cofactor>
    <cofactor evidence="3">
        <name>Ni(2+)</name>
        <dbReference type="ChEBI" id="CHEBI:49786"/>
    </cofactor>
    <text evidence="3">Divalent cations in the following order of efficiency: cobalt, magnesium, and, to a lesser extent, nickel ions.</text>
</comment>
<comment type="biophysicochemical properties">
    <kinetics>
        <KM evidence="3">0.08 mM for GPG (at 30 degrees Celsius)</KM>
        <KM evidence="3">0.27 mM for GPG (at 50 degrees Celsius)</KM>
        <KM evidence="3">0.28 mM for MPG (at 50 degrees Celsius)</KM>
        <Vmax evidence="3">0.1 umol/min/mg enzyme with GPG as substrate (at 30 degrees Celsius)</Vmax>
        <Vmax evidence="3">0.25 umol/min/mg enzyme with MPG as substrate (at 50 degrees Celsius)</Vmax>
        <Vmax evidence="3">0.58 umol/min/mg enzyme with GPG as substrate (at 50 degrees Celsius)</Vmax>
    </kinetics>
    <phDependence>
        <text evidence="3">Optimum pH is between 5.5 and 6.5 with GPG and MPG as substrates.</text>
    </phDependence>
    <temperatureDependence>
        <text evidence="3">Optimum temperature is 50 degrees Celsius with GPG and 60 degrees Celsius with MPG. With GPG as substrate, the activity becomes undetectable below 20 degrees Celsius and above 70 degrees Celsius, and with MPG as substrate, the activity is almost undetectable at 30 degrees Celsius. At 50 degrees Celsius, divalent cations are absolutely required for GpgP activity with GPG and MPG as the substrates.</text>
    </temperatureDependence>
</comment>
<comment type="subunit">
    <text evidence="1">Monomer.</text>
</comment>
<comment type="similarity">
    <text evidence="5">Belongs to the HAD-like hydrolase superfamily. MPGP family.</text>
</comment>
<protein>
    <recommendedName>
        <fullName evidence="4">Glucosyl-3-phosphoglycerate/mannosyl-3-phosphoglycerate phosphatase</fullName>
        <shortName evidence="4">GpgP</shortName>
        <shortName evidence="4">MpgP</shortName>
        <ecNumber evidence="3">3.1.3.70</ecNumber>
        <ecNumber evidence="3">3.1.3.85</ecNumber>
    </recommendedName>
</protein>
<gene>
    <name evidence="4" type="primary">gpgP</name>
    <name type="ordered locus">Mbur_0736</name>
</gene>
<keyword id="KW-0378">Hydrolase</keyword>
<keyword id="KW-0460">Magnesium</keyword>
<keyword id="KW-0479">Metal-binding</keyword>
<reference key="1">
    <citation type="journal article" date="2009" name="ISME J.">
        <title>The genome sequence of the psychrophilic archaeon, Methanococcoides burtonii: the role of genome evolution in cold adaptation.</title>
        <authorList>
            <person name="Allen M.A."/>
            <person name="Lauro F.M."/>
            <person name="Williams T.J."/>
            <person name="Burg D."/>
            <person name="Siddiqui K.S."/>
            <person name="De Francisci D."/>
            <person name="Chong K.W."/>
            <person name="Pilak O."/>
            <person name="Chew H.H."/>
            <person name="De Maere M.Z."/>
            <person name="Ting L."/>
            <person name="Katrib M."/>
            <person name="Ng C."/>
            <person name="Sowers K.R."/>
            <person name="Galperin M.Y."/>
            <person name="Anderson I.J."/>
            <person name="Ivanova N."/>
            <person name="Dalin E."/>
            <person name="Martinez M."/>
            <person name="Lapidus A."/>
            <person name="Hauser L."/>
            <person name="Land M."/>
            <person name="Thomas T."/>
            <person name="Cavicchioli R."/>
        </authorList>
    </citation>
    <scope>NUCLEOTIDE SEQUENCE [LARGE SCALE GENOMIC DNA]</scope>
    <source>
        <strain>DSM 6242 / NBRC 107633 / OCM 468 / ACE-M</strain>
    </source>
</reference>
<reference key="2">
    <citation type="journal article" date="2006" name="J. Bacteriol.">
        <title>Characterization of the biosynthetic pathway of glucosylglycerate in the archaeon Methanococcoides burtonii.</title>
        <authorList>
            <person name="Costa J."/>
            <person name="Empadinhas N."/>
            <person name="Goncalves L."/>
            <person name="Lamosa P."/>
            <person name="Santos H."/>
            <person name="da Costa M.S."/>
        </authorList>
    </citation>
    <scope>FUNCTION</scope>
    <scope>CATALYTIC ACTIVITY</scope>
    <scope>BIOPHYSICOCHEMICAL PROPERTIES</scope>
    <scope>COFACTOR</scope>
    <scope>SUBSTRATE SPECIFICITY</scope>
    <source>
        <strain>DSM 6242 / NBRC 107633 / OCM 468 / ACE-M</strain>
    </source>
</reference>
<dbReference type="EC" id="3.1.3.70" evidence="3"/>
<dbReference type="EC" id="3.1.3.85" evidence="3"/>
<dbReference type="EMBL" id="CP000300">
    <property type="protein sequence ID" value="ABE51701.1"/>
    <property type="molecule type" value="Genomic_DNA"/>
</dbReference>
<dbReference type="RefSeq" id="WP_011498859.1">
    <property type="nucleotide sequence ID" value="NC_007955.1"/>
</dbReference>
<dbReference type="SMR" id="Q12XX5"/>
<dbReference type="STRING" id="259564.Mbur_0736"/>
<dbReference type="GeneID" id="3996640"/>
<dbReference type="KEGG" id="mbu:Mbur_0736"/>
<dbReference type="HOGENOM" id="CLU_063016_0_0_2"/>
<dbReference type="OrthoDB" id="120822at2157"/>
<dbReference type="Proteomes" id="UP000001979">
    <property type="component" value="Chromosome"/>
</dbReference>
<dbReference type="GO" id="GO:0005829">
    <property type="term" value="C:cytosol"/>
    <property type="evidence" value="ECO:0007669"/>
    <property type="project" value="TreeGrafter"/>
</dbReference>
<dbReference type="GO" id="GO:0050897">
    <property type="term" value="F:cobalt ion binding"/>
    <property type="evidence" value="ECO:0000314"/>
    <property type="project" value="UniProtKB"/>
</dbReference>
<dbReference type="GO" id="GO:0000287">
    <property type="term" value="F:magnesium ion binding"/>
    <property type="evidence" value="ECO:0000314"/>
    <property type="project" value="UniProtKB"/>
</dbReference>
<dbReference type="GO" id="GO:0050531">
    <property type="term" value="F:mannosyl-3-phosphoglycerate phosphatase activity"/>
    <property type="evidence" value="ECO:0007669"/>
    <property type="project" value="UniProtKB-EC"/>
</dbReference>
<dbReference type="GO" id="GO:0016151">
    <property type="term" value="F:nickel cation binding"/>
    <property type="evidence" value="ECO:0000314"/>
    <property type="project" value="UniProtKB"/>
</dbReference>
<dbReference type="GO" id="GO:0016791">
    <property type="term" value="F:phosphatase activity"/>
    <property type="evidence" value="ECO:0000314"/>
    <property type="project" value="UniProtKB"/>
</dbReference>
<dbReference type="GO" id="GO:0051479">
    <property type="term" value="P:mannosylglycerate biosynthetic process"/>
    <property type="evidence" value="ECO:0007669"/>
    <property type="project" value="InterPro"/>
</dbReference>
<dbReference type="CDD" id="cd07507">
    <property type="entry name" value="HAD_Pase"/>
    <property type="match status" value="1"/>
</dbReference>
<dbReference type="FunFam" id="3.30.980.20:FF:000001">
    <property type="entry name" value="Glucosyl-3-phosphoglycerate/mannosyl-3-phosphoglycerate phosphatase"/>
    <property type="match status" value="1"/>
</dbReference>
<dbReference type="Gene3D" id="3.40.50.1000">
    <property type="entry name" value="HAD superfamily/HAD-like"/>
    <property type="match status" value="1"/>
</dbReference>
<dbReference type="Gene3D" id="3.30.980.20">
    <property type="entry name" value="Putative mannosyl-3-phosphoglycerate phosphatase, domain 2"/>
    <property type="match status" value="1"/>
</dbReference>
<dbReference type="InterPro" id="IPR036412">
    <property type="entry name" value="HAD-like_sf"/>
</dbReference>
<dbReference type="InterPro" id="IPR006381">
    <property type="entry name" value="HAD-SF-IIB-MPGP"/>
</dbReference>
<dbReference type="InterPro" id="IPR006379">
    <property type="entry name" value="HAD-SF_hydro_IIB"/>
</dbReference>
<dbReference type="InterPro" id="IPR023214">
    <property type="entry name" value="HAD_sf"/>
</dbReference>
<dbReference type="InterPro" id="IPR033980">
    <property type="entry name" value="MPG_Pase_thermophiles"/>
</dbReference>
<dbReference type="NCBIfam" id="TIGR01484">
    <property type="entry name" value="HAD-SF-IIB"/>
    <property type="match status" value="1"/>
</dbReference>
<dbReference type="NCBIfam" id="TIGR01486">
    <property type="entry name" value="HAD-SF-IIB-MPGP"/>
    <property type="match status" value="1"/>
</dbReference>
<dbReference type="NCBIfam" id="TIGR02461">
    <property type="entry name" value="osmo_MPG_phos"/>
    <property type="match status" value="1"/>
</dbReference>
<dbReference type="PANTHER" id="PTHR10000:SF8">
    <property type="entry name" value="HAD SUPERFAMILY HYDROLASE-LIKE, TYPE 3"/>
    <property type="match status" value="1"/>
</dbReference>
<dbReference type="PANTHER" id="PTHR10000">
    <property type="entry name" value="PHOSPHOSERINE PHOSPHATASE"/>
    <property type="match status" value="1"/>
</dbReference>
<dbReference type="Pfam" id="PF08282">
    <property type="entry name" value="Hydrolase_3"/>
    <property type="match status" value="1"/>
</dbReference>
<dbReference type="SFLD" id="SFLDG01142">
    <property type="entry name" value="C2.B.2:_Mannosyl-3-phosphoglyc"/>
    <property type="match status" value="1"/>
</dbReference>
<dbReference type="SFLD" id="SFLDG01140">
    <property type="entry name" value="C2.B:_Phosphomannomutase_and_P"/>
    <property type="match status" value="1"/>
</dbReference>
<dbReference type="SUPFAM" id="SSF56784">
    <property type="entry name" value="HAD-like"/>
    <property type="match status" value="1"/>
</dbReference>